<accession>A4QK20</accession>
<organism>
    <name type="scientific">Arabis hirsuta</name>
    <name type="common">Hairy rock-cress</name>
    <name type="synonym">Turritis hirsuta</name>
    <dbReference type="NCBI Taxonomy" id="78191"/>
    <lineage>
        <taxon>Eukaryota</taxon>
        <taxon>Viridiplantae</taxon>
        <taxon>Streptophyta</taxon>
        <taxon>Embryophyta</taxon>
        <taxon>Tracheophyta</taxon>
        <taxon>Spermatophyta</taxon>
        <taxon>Magnoliopsida</taxon>
        <taxon>eudicotyledons</taxon>
        <taxon>Gunneridae</taxon>
        <taxon>Pentapetalae</taxon>
        <taxon>rosids</taxon>
        <taxon>malvids</taxon>
        <taxon>Brassicales</taxon>
        <taxon>Brassicaceae</taxon>
        <taxon>Arabideae</taxon>
        <taxon>Arabis</taxon>
    </lineage>
</organism>
<reference key="1">
    <citation type="submission" date="2007-03" db="EMBL/GenBank/DDBJ databases">
        <title>Sequencing analysis of Arabis hirsuta chloroplast DNA.</title>
        <authorList>
            <person name="Hosouchi T."/>
            <person name="Tsuruoka H."/>
            <person name="Kotani H."/>
        </authorList>
    </citation>
    <scope>NUCLEOTIDE SEQUENCE [LARGE SCALE GENOMIC DNA]</scope>
</reference>
<feature type="chain" id="PRO_0000293419" description="Small ribosomal subunit protein uS4c">
    <location>
        <begin position="1"/>
        <end position="201"/>
    </location>
</feature>
<feature type="domain" description="S4 RNA-binding">
    <location>
        <begin position="89"/>
        <end position="152"/>
    </location>
</feature>
<feature type="region of interest" description="Disordered" evidence="2">
    <location>
        <begin position="20"/>
        <end position="44"/>
    </location>
</feature>
<keyword id="KW-0150">Chloroplast</keyword>
<keyword id="KW-0934">Plastid</keyword>
<keyword id="KW-0687">Ribonucleoprotein</keyword>
<keyword id="KW-0689">Ribosomal protein</keyword>
<keyword id="KW-0694">RNA-binding</keyword>
<keyword id="KW-0699">rRNA-binding</keyword>
<evidence type="ECO:0000250" key="1"/>
<evidence type="ECO:0000256" key="2">
    <source>
        <dbReference type="SAM" id="MobiDB-lite"/>
    </source>
</evidence>
<evidence type="ECO:0000305" key="3"/>
<sequence>MSRYRGPRFKKIRRLGALPGLTSKRPRAGSDLRNQSRSGKKSQYRIRLEEKQKLRFHYGLTERQLLKYVRIAGKAKGSTGQVLLQLLEMRLDNILFRLGMALTIPQARQLVNHGHILVNGRIVDIPSYRCKPRDIITVKDEQNSRTLVQNLLDSSAPEELPNHLTLHTFQYEGLVNQIIDRKCVGLKINELLVVEYYSRQT</sequence>
<proteinExistence type="inferred from homology"/>
<comment type="function">
    <text evidence="1">One of the primary rRNA binding proteins, it binds directly to 16S rRNA where it nucleates assembly of the body of the 30S subunit.</text>
</comment>
<comment type="function">
    <text evidence="1">With S5 and S12 plays an important role in translational accuracy.</text>
</comment>
<comment type="subunit">
    <text evidence="1">Part of the 30S ribosomal subunit. Contacts protein S5. The interaction surface between S4 and S5 is involved in control of translational fidelity (By similarity).</text>
</comment>
<comment type="subcellular location">
    <subcellularLocation>
        <location>Plastid</location>
        <location>Chloroplast</location>
    </subcellularLocation>
</comment>
<comment type="similarity">
    <text evidence="3">Belongs to the universal ribosomal protein uS4 family.</text>
</comment>
<protein>
    <recommendedName>
        <fullName evidence="3">Small ribosomal subunit protein uS4c</fullName>
    </recommendedName>
    <alternativeName>
        <fullName>30S ribosomal protein S4, chloroplastic</fullName>
    </alternativeName>
</protein>
<geneLocation type="chloroplast"/>
<dbReference type="EMBL" id="AP009369">
    <property type="protein sequence ID" value="BAF50025.1"/>
    <property type="molecule type" value="Genomic_DNA"/>
</dbReference>
<dbReference type="RefSeq" id="YP_001123201.1">
    <property type="nucleotide sequence ID" value="NC_009268.1"/>
</dbReference>
<dbReference type="SMR" id="A4QK20"/>
<dbReference type="GeneID" id="4962550"/>
<dbReference type="GO" id="GO:0009507">
    <property type="term" value="C:chloroplast"/>
    <property type="evidence" value="ECO:0007669"/>
    <property type="project" value="UniProtKB-SubCell"/>
</dbReference>
<dbReference type="GO" id="GO:0015935">
    <property type="term" value="C:small ribosomal subunit"/>
    <property type="evidence" value="ECO:0007669"/>
    <property type="project" value="InterPro"/>
</dbReference>
<dbReference type="GO" id="GO:0019843">
    <property type="term" value="F:rRNA binding"/>
    <property type="evidence" value="ECO:0007669"/>
    <property type="project" value="UniProtKB-UniRule"/>
</dbReference>
<dbReference type="GO" id="GO:0003735">
    <property type="term" value="F:structural constituent of ribosome"/>
    <property type="evidence" value="ECO:0007669"/>
    <property type="project" value="InterPro"/>
</dbReference>
<dbReference type="GO" id="GO:0042274">
    <property type="term" value="P:ribosomal small subunit biogenesis"/>
    <property type="evidence" value="ECO:0007669"/>
    <property type="project" value="TreeGrafter"/>
</dbReference>
<dbReference type="GO" id="GO:0006412">
    <property type="term" value="P:translation"/>
    <property type="evidence" value="ECO:0007669"/>
    <property type="project" value="UniProtKB-UniRule"/>
</dbReference>
<dbReference type="CDD" id="cd00165">
    <property type="entry name" value="S4"/>
    <property type="match status" value="1"/>
</dbReference>
<dbReference type="FunFam" id="1.10.1050.10:FF:000002">
    <property type="entry name" value="30S ribosomal protein S4, chloroplastic"/>
    <property type="match status" value="1"/>
</dbReference>
<dbReference type="FunFam" id="3.10.290.10:FF:000081">
    <property type="entry name" value="30S ribosomal protein S4, chloroplastic"/>
    <property type="match status" value="1"/>
</dbReference>
<dbReference type="Gene3D" id="1.10.1050.10">
    <property type="entry name" value="Ribosomal Protein S4 Delta 41, Chain A, domain 1"/>
    <property type="match status" value="1"/>
</dbReference>
<dbReference type="Gene3D" id="3.10.290.10">
    <property type="entry name" value="RNA-binding S4 domain"/>
    <property type="match status" value="1"/>
</dbReference>
<dbReference type="HAMAP" id="MF_01306_B">
    <property type="entry name" value="Ribosomal_uS4_B"/>
    <property type="match status" value="1"/>
</dbReference>
<dbReference type="InterPro" id="IPR022801">
    <property type="entry name" value="Ribosomal_uS4"/>
</dbReference>
<dbReference type="InterPro" id="IPR005709">
    <property type="entry name" value="Ribosomal_uS4_bac-type"/>
</dbReference>
<dbReference type="InterPro" id="IPR018079">
    <property type="entry name" value="Ribosomal_uS4_CS"/>
</dbReference>
<dbReference type="InterPro" id="IPR001912">
    <property type="entry name" value="Ribosomal_uS4_N"/>
</dbReference>
<dbReference type="InterPro" id="IPR002942">
    <property type="entry name" value="S4_RNA-bd"/>
</dbReference>
<dbReference type="InterPro" id="IPR036986">
    <property type="entry name" value="S4_RNA-bd_sf"/>
</dbReference>
<dbReference type="NCBIfam" id="NF003717">
    <property type="entry name" value="PRK05327.1"/>
    <property type="match status" value="1"/>
</dbReference>
<dbReference type="NCBIfam" id="TIGR01017">
    <property type="entry name" value="rpsD_bact"/>
    <property type="match status" value="1"/>
</dbReference>
<dbReference type="PANTHER" id="PTHR11831">
    <property type="entry name" value="30S 40S RIBOSOMAL PROTEIN"/>
    <property type="match status" value="1"/>
</dbReference>
<dbReference type="PANTHER" id="PTHR11831:SF4">
    <property type="entry name" value="SMALL RIBOSOMAL SUBUNIT PROTEIN US4M"/>
    <property type="match status" value="1"/>
</dbReference>
<dbReference type="Pfam" id="PF00163">
    <property type="entry name" value="Ribosomal_S4"/>
    <property type="match status" value="1"/>
</dbReference>
<dbReference type="Pfam" id="PF01479">
    <property type="entry name" value="S4"/>
    <property type="match status" value="1"/>
</dbReference>
<dbReference type="SMART" id="SM01390">
    <property type="entry name" value="Ribosomal_S4"/>
    <property type="match status" value="1"/>
</dbReference>
<dbReference type="SMART" id="SM00363">
    <property type="entry name" value="S4"/>
    <property type="match status" value="1"/>
</dbReference>
<dbReference type="SUPFAM" id="SSF55174">
    <property type="entry name" value="Alpha-L RNA-binding motif"/>
    <property type="match status" value="1"/>
</dbReference>
<dbReference type="PROSITE" id="PS00632">
    <property type="entry name" value="RIBOSOMAL_S4"/>
    <property type="match status" value="1"/>
</dbReference>
<dbReference type="PROSITE" id="PS50889">
    <property type="entry name" value="S4"/>
    <property type="match status" value="1"/>
</dbReference>
<name>RR4_ARAHI</name>
<gene>
    <name type="primary">rps4</name>
</gene>